<organism>
    <name type="scientific">Lacticaseibacillus paracasei (strain ATCC 334 / BCRC 17002 / CCUG 31169 / CIP 107868 / KCTC 3260 / NRRL B-441)</name>
    <name type="common">Lactobacillus paracasei</name>
    <dbReference type="NCBI Taxonomy" id="321967"/>
    <lineage>
        <taxon>Bacteria</taxon>
        <taxon>Bacillati</taxon>
        <taxon>Bacillota</taxon>
        <taxon>Bacilli</taxon>
        <taxon>Lactobacillales</taxon>
        <taxon>Lactobacillaceae</taxon>
        <taxon>Lacticaseibacillus</taxon>
    </lineage>
</organism>
<reference key="1">
    <citation type="journal article" date="2006" name="Proc. Natl. Acad. Sci. U.S.A.">
        <title>Comparative genomics of the lactic acid bacteria.</title>
        <authorList>
            <person name="Makarova K.S."/>
            <person name="Slesarev A."/>
            <person name="Wolf Y.I."/>
            <person name="Sorokin A."/>
            <person name="Mirkin B."/>
            <person name="Koonin E.V."/>
            <person name="Pavlov A."/>
            <person name="Pavlova N."/>
            <person name="Karamychev V."/>
            <person name="Polouchine N."/>
            <person name="Shakhova V."/>
            <person name="Grigoriev I."/>
            <person name="Lou Y."/>
            <person name="Rohksar D."/>
            <person name="Lucas S."/>
            <person name="Huang K."/>
            <person name="Goodstein D.M."/>
            <person name="Hawkins T."/>
            <person name="Plengvidhya V."/>
            <person name="Welker D."/>
            <person name="Hughes J."/>
            <person name="Goh Y."/>
            <person name="Benson A."/>
            <person name="Baldwin K."/>
            <person name="Lee J.-H."/>
            <person name="Diaz-Muniz I."/>
            <person name="Dosti B."/>
            <person name="Smeianov V."/>
            <person name="Wechter W."/>
            <person name="Barabote R."/>
            <person name="Lorca G."/>
            <person name="Altermann E."/>
            <person name="Barrangou R."/>
            <person name="Ganesan B."/>
            <person name="Xie Y."/>
            <person name="Rawsthorne H."/>
            <person name="Tamir D."/>
            <person name="Parker C."/>
            <person name="Breidt F."/>
            <person name="Broadbent J.R."/>
            <person name="Hutkins R."/>
            <person name="O'Sullivan D."/>
            <person name="Steele J."/>
            <person name="Unlu G."/>
            <person name="Saier M.H. Jr."/>
            <person name="Klaenhammer T."/>
            <person name="Richardson P."/>
            <person name="Kozyavkin S."/>
            <person name="Weimer B.C."/>
            <person name="Mills D.A."/>
        </authorList>
    </citation>
    <scope>NUCLEOTIDE SEQUENCE [LARGE SCALE GENOMIC DNA]</scope>
    <source>
        <strain>ATCC 334 / BCRC 17002 / CCUG 31169 / CIP 107868 / KCTC 3260 / NRRL B-441</strain>
    </source>
</reference>
<gene>
    <name evidence="1" type="primary">rpsU</name>
    <name type="ordered locus">LSEI_1521</name>
</gene>
<evidence type="ECO:0000255" key="1">
    <source>
        <dbReference type="HAMAP-Rule" id="MF_00358"/>
    </source>
</evidence>
<evidence type="ECO:0000305" key="2"/>
<accession>Q038S6</accession>
<dbReference type="EMBL" id="CP000423">
    <property type="protein sequence ID" value="ABJ70296.1"/>
    <property type="molecule type" value="Genomic_DNA"/>
</dbReference>
<dbReference type="RefSeq" id="WP_003565673.1">
    <property type="nucleotide sequence ID" value="NC_008526.1"/>
</dbReference>
<dbReference type="RefSeq" id="YP_806738.1">
    <property type="nucleotide sequence ID" value="NC_008526.1"/>
</dbReference>
<dbReference type="SMR" id="Q038S6"/>
<dbReference type="STRING" id="321967.LSEI_1521"/>
<dbReference type="PaxDb" id="321967-LSEI_1521"/>
<dbReference type="GeneID" id="57090178"/>
<dbReference type="KEGG" id="lca:LSEI_1521"/>
<dbReference type="PATRIC" id="fig|321967.11.peg.1503"/>
<dbReference type="HOGENOM" id="CLU_159258_3_2_9"/>
<dbReference type="Proteomes" id="UP000001651">
    <property type="component" value="Chromosome"/>
</dbReference>
<dbReference type="GO" id="GO:1990904">
    <property type="term" value="C:ribonucleoprotein complex"/>
    <property type="evidence" value="ECO:0007669"/>
    <property type="project" value="UniProtKB-KW"/>
</dbReference>
<dbReference type="GO" id="GO:0005840">
    <property type="term" value="C:ribosome"/>
    <property type="evidence" value="ECO:0007669"/>
    <property type="project" value="UniProtKB-KW"/>
</dbReference>
<dbReference type="GO" id="GO:0003735">
    <property type="term" value="F:structural constituent of ribosome"/>
    <property type="evidence" value="ECO:0007669"/>
    <property type="project" value="InterPro"/>
</dbReference>
<dbReference type="GO" id="GO:0006412">
    <property type="term" value="P:translation"/>
    <property type="evidence" value="ECO:0007669"/>
    <property type="project" value="UniProtKB-UniRule"/>
</dbReference>
<dbReference type="Gene3D" id="1.20.5.1150">
    <property type="entry name" value="Ribosomal protein S8"/>
    <property type="match status" value="1"/>
</dbReference>
<dbReference type="HAMAP" id="MF_00358">
    <property type="entry name" value="Ribosomal_bS21"/>
    <property type="match status" value="1"/>
</dbReference>
<dbReference type="InterPro" id="IPR001911">
    <property type="entry name" value="Ribosomal_bS21"/>
</dbReference>
<dbReference type="InterPro" id="IPR018278">
    <property type="entry name" value="Ribosomal_bS21_CS"/>
</dbReference>
<dbReference type="InterPro" id="IPR038380">
    <property type="entry name" value="Ribosomal_bS21_sf"/>
</dbReference>
<dbReference type="NCBIfam" id="TIGR00030">
    <property type="entry name" value="S21p"/>
    <property type="match status" value="1"/>
</dbReference>
<dbReference type="PANTHER" id="PTHR21109">
    <property type="entry name" value="MITOCHONDRIAL 28S RIBOSOMAL PROTEIN S21"/>
    <property type="match status" value="1"/>
</dbReference>
<dbReference type="PANTHER" id="PTHR21109:SF22">
    <property type="entry name" value="SMALL RIBOSOMAL SUBUNIT PROTEIN BS21"/>
    <property type="match status" value="1"/>
</dbReference>
<dbReference type="Pfam" id="PF01165">
    <property type="entry name" value="Ribosomal_S21"/>
    <property type="match status" value="1"/>
</dbReference>
<dbReference type="PRINTS" id="PR00976">
    <property type="entry name" value="RIBOSOMALS21"/>
</dbReference>
<dbReference type="PROSITE" id="PS01181">
    <property type="entry name" value="RIBOSOMAL_S21"/>
    <property type="match status" value="1"/>
</dbReference>
<protein>
    <recommendedName>
        <fullName evidence="1">Small ribosomal subunit protein bS21</fullName>
    </recommendedName>
    <alternativeName>
        <fullName evidence="2">30S ribosomal protein S21</fullName>
    </alternativeName>
</protein>
<feature type="chain" id="PRO_1000005126" description="Small ribosomal subunit protein bS21">
    <location>
        <begin position="1"/>
        <end position="58"/>
    </location>
</feature>
<name>RS21_LACP3</name>
<proteinExistence type="inferred from homology"/>
<keyword id="KW-1185">Reference proteome</keyword>
<keyword id="KW-0687">Ribonucleoprotein</keyword>
<keyword id="KW-0689">Ribosomal protein</keyword>
<comment type="similarity">
    <text evidence="1">Belongs to the bacterial ribosomal protein bS21 family.</text>
</comment>
<sequence>MAKTVVKKNESLDDALRRFKRTVSKSGTLAEYRKREFYEKPSVRRKLKSEAARKRKKF</sequence>